<accession>B7NI05</accession>
<proteinExistence type="inferred from homology"/>
<gene>
    <name evidence="1" type="primary">metK</name>
    <name type="ordered locus">ECIAI39_3360</name>
</gene>
<protein>
    <recommendedName>
        <fullName evidence="1">S-adenosylmethionine synthase</fullName>
        <shortName evidence="1">AdoMet synthase</shortName>
        <ecNumber evidence="1">2.5.1.6</ecNumber>
    </recommendedName>
    <alternativeName>
        <fullName evidence="1">MAT</fullName>
    </alternativeName>
    <alternativeName>
        <fullName evidence="1">Methionine adenosyltransferase</fullName>
    </alternativeName>
</protein>
<name>METK_ECO7I</name>
<evidence type="ECO:0000255" key="1">
    <source>
        <dbReference type="HAMAP-Rule" id="MF_00086"/>
    </source>
</evidence>
<sequence>MAKHLFTSESVSEGHPDKIADQISDAVLDAILEQDPKARVACETYVKTGMVLVGGEITTSAWVDIEEITRNTVREIGYVHSDMGFDANSCAVLSAIGKQSPDINQGVDRADPLEQGAGDQGLMFGYATNETDVLMPAPITYAHRLVQRQAEVRKNGTLPWLRPDAKSQVTFQYDDGKIVGIDAVVLSTQHSEEIDQKSLQEAVMEEIIKPILPAEWLTSATKFFINPTGRFVIGGPMGDCGLTGRKIIVDTYGGMARHGGGAFSGKDPSKVDRSAAYAARYVAKNIVAAGLADRCEIQVSYAIGVAEPTSIMVETFGTEKVPSEQLTLLVREFFDLRPYGLIQMLDLLHPIYKETAAYGHFGREHFPWEKTDKAQLLRDAAGLK</sequence>
<dbReference type="EC" id="2.5.1.6" evidence="1"/>
<dbReference type="EMBL" id="CU928164">
    <property type="protein sequence ID" value="CAR19477.1"/>
    <property type="molecule type" value="Genomic_DNA"/>
</dbReference>
<dbReference type="RefSeq" id="WP_001062128.1">
    <property type="nucleotide sequence ID" value="NC_011750.1"/>
</dbReference>
<dbReference type="RefSeq" id="YP_002409281.1">
    <property type="nucleotide sequence ID" value="NC_011750.1"/>
</dbReference>
<dbReference type="SMR" id="B7NI05"/>
<dbReference type="STRING" id="585057.ECIAI39_3360"/>
<dbReference type="GeneID" id="93779055"/>
<dbReference type="KEGG" id="ect:ECIAI39_3360"/>
<dbReference type="PATRIC" id="fig|585057.6.peg.3488"/>
<dbReference type="HOGENOM" id="CLU_041802_1_1_6"/>
<dbReference type="UniPathway" id="UPA00315">
    <property type="reaction ID" value="UER00080"/>
</dbReference>
<dbReference type="Proteomes" id="UP000000749">
    <property type="component" value="Chromosome"/>
</dbReference>
<dbReference type="GO" id="GO:0005737">
    <property type="term" value="C:cytoplasm"/>
    <property type="evidence" value="ECO:0007669"/>
    <property type="project" value="UniProtKB-SubCell"/>
</dbReference>
<dbReference type="GO" id="GO:0005524">
    <property type="term" value="F:ATP binding"/>
    <property type="evidence" value="ECO:0007669"/>
    <property type="project" value="UniProtKB-UniRule"/>
</dbReference>
<dbReference type="GO" id="GO:0000287">
    <property type="term" value="F:magnesium ion binding"/>
    <property type="evidence" value="ECO:0007669"/>
    <property type="project" value="UniProtKB-UniRule"/>
</dbReference>
<dbReference type="GO" id="GO:0004478">
    <property type="term" value="F:methionine adenosyltransferase activity"/>
    <property type="evidence" value="ECO:0007669"/>
    <property type="project" value="UniProtKB-UniRule"/>
</dbReference>
<dbReference type="GO" id="GO:0006730">
    <property type="term" value="P:one-carbon metabolic process"/>
    <property type="evidence" value="ECO:0007669"/>
    <property type="project" value="UniProtKB-KW"/>
</dbReference>
<dbReference type="GO" id="GO:0006556">
    <property type="term" value="P:S-adenosylmethionine biosynthetic process"/>
    <property type="evidence" value="ECO:0007669"/>
    <property type="project" value="UniProtKB-UniRule"/>
</dbReference>
<dbReference type="CDD" id="cd18079">
    <property type="entry name" value="S-AdoMet_synt"/>
    <property type="match status" value="1"/>
</dbReference>
<dbReference type="FunFam" id="3.30.300.10:FF:000001">
    <property type="entry name" value="S-adenosylmethionine synthase"/>
    <property type="match status" value="1"/>
</dbReference>
<dbReference type="FunFam" id="3.30.300.10:FF:000003">
    <property type="entry name" value="S-adenosylmethionine synthase"/>
    <property type="match status" value="1"/>
</dbReference>
<dbReference type="Gene3D" id="3.30.300.10">
    <property type="match status" value="3"/>
</dbReference>
<dbReference type="HAMAP" id="MF_00086">
    <property type="entry name" value="S_AdoMet_synth1"/>
    <property type="match status" value="1"/>
</dbReference>
<dbReference type="InterPro" id="IPR022631">
    <property type="entry name" value="ADOMET_SYNTHASE_CS"/>
</dbReference>
<dbReference type="InterPro" id="IPR022630">
    <property type="entry name" value="S-AdoMet_synt_C"/>
</dbReference>
<dbReference type="InterPro" id="IPR022629">
    <property type="entry name" value="S-AdoMet_synt_central"/>
</dbReference>
<dbReference type="InterPro" id="IPR022628">
    <property type="entry name" value="S-AdoMet_synt_N"/>
</dbReference>
<dbReference type="InterPro" id="IPR002133">
    <property type="entry name" value="S-AdoMet_synthetase"/>
</dbReference>
<dbReference type="InterPro" id="IPR022636">
    <property type="entry name" value="S-AdoMet_synthetase_sfam"/>
</dbReference>
<dbReference type="NCBIfam" id="TIGR01034">
    <property type="entry name" value="metK"/>
    <property type="match status" value="1"/>
</dbReference>
<dbReference type="PANTHER" id="PTHR11964">
    <property type="entry name" value="S-ADENOSYLMETHIONINE SYNTHETASE"/>
    <property type="match status" value="1"/>
</dbReference>
<dbReference type="Pfam" id="PF02773">
    <property type="entry name" value="S-AdoMet_synt_C"/>
    <property type="match status" value="1"/>
</dbReference>
<dbReference type="Pfam" id="PF02772">
    <property type="entry name" value="S-AdoMet_synt_M"/>
    <property type="match status" value="1"/>
</dbReference>
<dbReference type="Pfam" id="PF00438">
    <property type="entry name" value="S-AdoMet_synt_N"/>
    <property type="match status" value="1"/>
</dbReference>
<dbReference type="PIRSF" id="PIRSF000497">
    <property type="entry name" value="MAT"/>
    <property type="match status" value="1"/>
</dbReference>
<dbReference type="SUPFAM" id="SSF55973">
    <property type="entry name" value="S-adenosylmethionine synthetase"/>
    <property type="match status" value="3"/>
</dbReference>
<dbReference type="PROSITE" id="PS00376">
    <property type="entry name" value="ADOMET_SYNTHASE_1"/>
    <property type="match status" value="1"/>
</dbReference>
<dbReference type="PROSITE" id="PS00377">
    <property type="entry name" value="ADOMET_SYNTHASE_2"/>
    <property type="match status" value="1"/>
</dbReference>
<keyword id="KW-0067">ATP-binding</keyword>
<keyword id="KW-0963">Cytoplasm</keyword>
<keyword id="KW-0460">Magnesium</keyword>
<keyword id="KW-0479">Metal-binding</keyword>
<keyword id="KW-0547">Nucleotide-binding</keyword>
<keyword id="KW-0554">One-carbon metabolism</keyword>
<keyword id="KW-0630">Potassium</keyword>
<keyword id="KW-0808">Transferase</keyword>
<feature type="chain" id="PRO_1000196711" description="S-adenosylmethionine synthase">
    <location>
        <begin position="1"/>
        <end position="384"/>
    </location>
</feature>
<feature type="region of interest" description="Flexible loop" evidence="1">
    <location>
        <begin position="99"/>
        <end position="109"/>
    </location>
</feature>
<feature type="binding site" description="in other chain" evidence="1">
    <location>
        <position position="15"/>
    </location>
    <ligand>
        <name>ATP</name>
        <dbReference type="ChEBI" id="CHEBI:30616"/>
        <note>ligand shared between two neighboring subunits</note>
    </ligand>
</feature>
<feature type="binding site" evidence="1">
    <location>
        <position position="17"/>
    </location>
    <ligand>
        <name>Mg(2+)</name>
        <dbReference type="ChEBI" id="CHEBI:18420"/>
    </ligand>
</feature>
<feature type="binding site" evidence="1">
    <location>
        <position position="43"/>
    </location>
    <ligand>
        <name>K(+)</name>
        <dbReference type="ChEBI" id="CHEBI:29103"/>
    </ligand>
</feature>
<feature type="binding site" description="in other chain" evidence="1">
    <location>
        <position position="56"/>
    </location>
    <ligand>
        <name>L-methionine</name>
        <dbReference type="ChEBI" id="CHEBI:57844"/>
        <note>ligand shared between two neighboring subunits</note>
    </ligand>
</feature>
<feature type="binding site" description="in other chain" evidence="1">
    <location>
        <position position="99"/>
    </location>
    <ligand>
        <name>L-methionine</name>
        <dbReference type="ChEBI" id="CHEBI:57844"/>
        <note>ligand shared between two neighboring subunits</note>
    </ligand>
</feature>
<feature type="binding site" description="in other chain" evidence="1">
    <location>
        <begin position="164"/>
        <end position="166"/>
    </location>
    <ligand>
        <name>ATP</name>
        <dbReference type="ChEBI" id="CHEBI:30616"/>
        <note>ligand shared between two neighboring subunits</note>
    </ligand>
</feature>
<feature type="binding site" description="in other chain" evidence="1">
    <location>
        <begin position="230"/>
        <end position="231"/>
    </location>
    <ligand>
        <name>ATP</name>
        <dbReference type="ChEBI" id="CHEBI:30616"/>
        <note>ligand shared between two neighboring subunits</note>
    </ligand>
</feature>
<feature type="binding site" evidence="1">
    <location>
        <position position="239"/>
    </location>
    <ligand>
        <name>ATP</name>
        <dbReference type="ChEBI" id="CHEBI:30616"/>
        <note>ligand shared between two neighboring subunits</note>
    </ligand>
</feature>
<feature type="binding site" evidence="1">
    <location>
        <position position="239"/>
    </location>
    <ligand>
        <name>L-methionine</name>
        <dbReference type="ChEBI" id="CHEBI:57844"/>
        <note>ligand shared between two neighboring subunits</note>
    </ligand>
</feature>
<feature type="binding site" description="in other chain" evidence="1">
    <location>
        <begin position="245"/>
        <end position="246"/>
    </location>
    <ligand>
        <name>ATP</name>
        <dbReference type="ChEBI" id="CHEBI:30616"/>
        <note>ligand shared between two neighboring subunits</note>
    </ligand>
</feature>
<feature type="binding site" evidence="1">
    <location>
        <position position="262"/>
    </location>
    <ligand>
        <name>ATP</name>
        <dbReference type="ChEBI" id="CHEBI:30616"/>
        <note>ligand shared between two neighboring subunits</note>
    </ligand>
</feature>
<feature type="binding site" evidence="1">
    <location>
        <position position="266"/>
    </location>
    <ligand>
        <name>ATP</name>
        <dbReference type="ChEBI" id="CHEBI:30616"/>
        <note>ligand shared between two neighboring subunits</note>
    </ligand>
</feature>
<feature type="binding site" description="in other chain" evidence="1">
    <location>
        <position position="270"/>
    </location>
    <ligand>
        <name>L-methionine</name>
        <dbReference type="ChEBI" id="CHEBI:57844"/>
        <note>ligand shared between two neighboring subunits</note>
    </ligand>
</feature>
<reference key="1">
    <citation type="journal article" date="2009" name="PLoS Genet.">
        <title>Organised genome dynamics in the Escherichia coli species results in highly diverse adaptive paths.</title>
        <authorList>
            <person name="Touchon M."/>
            <person name="Hoede C."/>
            <person name="Tenaillon O."/>
            <person name="Barbe V."/>
            <person name="Baeriswyl S."/>
            <person name="Bidet P."/>
            <person name="Bingen E."/>
            <person name="Bonacorsi S."/>
            <person name="Bouchier C."/>
            <person name="Bouvet O."/>
            <person name="Calteau A."/>
            <person name="Chiapello H."/>
            <person name="Clermont O."/>
            <person name="Cruveiller S."/>
            <person name="Danchin A."/>
            <person name="Diard M."/>
            <person name="Dossat C."/>
            <person name="Karoui M.E."/>
            <person name="Frapy E."/>
            <person name="Garry L."/>
            <person name="Ghigo J.M."/>
            <person name="Gilles A.M."/>
            <person name="Johnson J."/>
            <person name="Le Bouguenec C."/>
            <person name="Lescat M."/>
            <person name="Mangenot S."/>
            <person name="Martinez-Jehanne V."/>
            <person name="Matic I."/>
            <person name="Nassif X."/>
            <person name="Oztas S."/>
            <person name="Petit M.A."/>
            <person name="Pichon C."/>
            <person name="Rouy Z."/>
            <person name="Ruf C.S."/>
            <person name="Schneider D."/>
            <person name="Tourret J."/>
            <person name="Vacherie B."/>
            <person name="Vallenet D."/>
            <person name="Medigue C."/>
            <person name="Rocha E.P.C."/>
            <person name="Denamur E."/>
        </authorList>
    </citation>
    <scope>NUCLEOTIDE SEQUENCE [LARGE SCALE GENOMIC DNA]</scope>
    <source>
        <strain>IAI39 / ExPEC</strain>
    </source>
</reference>
<comment type="function">
    <text evidence="1">Catalyzes the formation of S-adenosylmethionine (AdoMet) from methionine and ATP. The overall synthetic reaction is composed of two sequential steps, AdoMet formation and the subsequent tripolyphosphate hydrolysis which occurs prior to release of AdoMet from the enzyme.</text>
</comment>
<comment type="catalytic activity">
    <reaction evidence="1">
        <text>L-methionine + ATP + H2O = S-adenosyl-L-methionine + phosphate + diphosphate</text>
        <dbReference type="Rhea" id="RHEA:21080"/>
        <dbReference type="ChEBI" id="CHEBI:15377"/>
        <dbReference type="ChEBI" id="CHEBI:30616"/>
        <dbReference type="ChEBI" id="CHEBI:33019"/>
        <dbReference type="ChEBI" id="CHEBI:43474"/>
        <dbReference type="ChEBI" id="CHEBI:57844"/>
        <dbReference type="ChEBI" id="CHEBI:59789"/>
        <dbReference type="EC" id="2.5.1.6"/>
    </reaction>
</comment>
<comment type="cofactor">
    <cofactor evidence="1">
        <name>Mg(2+)</name>
        <dbReference type="ChEBI" id="CHEBI:18420"/>
    </cofactor>
    <text evidence="1">Binds 2 divalent ions per subunit.</text>
</comment>
<comment type="cofactor">
    <cofactor evidence="1">
        <name>K(+)</name>
        <dbReference type="ChEBI" id="CHEBI:29103"/>
    </cofactor>
    <text evidence="1">Binds 1 potassium ion per subunit.</text>
</comment>
<comment type="pathway">
    <text evidence="1">Amino-acid biosynthesis; S-adenosyl-L-methionine biosynthesis; S-adenosyl-L-methionine from L-methionine: step 1/1.</text>
</comment>
<comment type="subunit">
    <text evidence="1">Homotetramer; dimer of dimers.</text>
</comment>
<comment type="subcellular location">
    <subcellularLocation>
        <location evidence="1">Cytoplasm</location>
    </subcellularLocation>
</comment>
<comment type="similarity">
    <text evidence="1">Belongs to the AdoMet synthase family.</text>
</comment>
<organism>
    <name type="scientific">Escherichia coli O7:K1 (strain IAI39 / ExPEC)</name>
    <dbReference type="NCBI Taxonomy" id="585057"/>
    <lineage>
        <taxon>Bacteria</taxon>
        <taxon>Pseudomonadati</taxon>
        <taxon>Pseudomonadota</taxon>
        <taxon>Gammaproteobacteria</taxon>
        <taxon>Enterobacterales</taxon>
        <taxon>Enterobacteriaceae</taxon>
        <taxon>Escherichia</taxon>
    </lineage>
</organism>